<sequence>MSTLAKIEALLFVAGEDGIRVRQLAELLSLPPTGIQQSLGKLAQKYEKDPDSSLALIETSGAYRLVTKPQFAEILKEYSKAPINQSLSRAALETLSIIAYKQPITRIEIDAIRGVNSSGALAKLQAFDLIKEDGKKEVLGRPNLYVTTDYFLDYMGINHLEELPVIDELEIQAQESQLFGERIEEDENQ</sequence>
<dbReference type="EMBL" id="CP001015">
    <property type="protein sequence ID" value="ACF56657.1"/>
    <property type="molecule type" value="Genomic_DNA"/>
</dbReference>
<dbReference type="SMR" id="B5E1Y7"/>
<dbReference type="KEGG" id="spx:SPG_1760"/>
<dbReference type="HOGENOM" id="CLU_045647_5_3_9"/>
<dbReference type="GO" id="GO:0005737">
    <property type="term" value="C:cytoplasm"/>
    <property type="evidence" value="ECO:0007669"/>
    <property type="project" value="UniProtKB-SubCell"/>
</dbReference>
<dbReference type="GO" id="GO:0051301">
    <property type="term" value="P:cell division"/>
    <property type="evidence" value="ECO:0007669"/>
    <property type="project" value="UniProtKB-KW"/>
</dbReference>
<dbReference type="GO" id="GO:0051304">
    <property type="term" value="P:chromosome separation"/>
    <property type="evidence" value="ECO:0007669"/>
    <property type="project" value="InterPro"/>
</dbReference>
<dbReference type="GO" id="GO:0006260">
    <property type="term" value="P:DNA replication"/>
    <property type="evidence" value="ECO:0007669"/>
    <property type="project" value="UniProtKB-UniRule"/>
</dbReference>
<dbReference type="FunFam" id="1.10.10.10:FF:000507">
    <property type="entry name" value="Segregation and condensation protein B"/>
    <property type="match status" value="1"/>
</dbReference>
<dbReference type="FunFam" id="1.10.10.10:FF:000508">
    <property type="entry name" value="Segregation and condensation protein B"/>
    <property type="match status" value="1"/>
</dbReference>
<dbReference type="Gene3D" id="1.10.10.10">
    <property type="entry name" value="Winged helix-like DNA-binding domain superfamily/Winged helix DNA-binding domain"/>
    <property type="match status" value="2"/>
</dbReference>
<dbReference type="HAMAP" id="MF_01804">
    <property type="entry name" value="ScpB"/>
    <property type="match status" value="1"/>
</dbReference>
<dbReference type="InterPro" id="IPR005234">
    <property type="entry name" value="ScpB_csome_segregation"/>
</dbReference>
<dbReference type="InterPro" id="IPR036388">
    <property type="entry name" value="WH-like_DNA-bd_sf"/>
</dbReference>
<dbReference type="InterPro" id="IPR036390">
    <property type="entry name" value="WH_DNA-bd_sf"/>
</dbReference>
<dbReference type="NCBIfam" id="TIGR00281">
    <property type="entry name" value="SMC-Scp complex subunit ScpB"/>
    <property type="match status" value="1"/>
</dbReference>
<dbReference type="PANTHER" id="PTHR34298">
    <property type="entry name" value="SEGREGATION AND CONDENSATION PROTEIN B"/>
    <property type="match status" value="1"/>
</dbReference>
<dbReference type="PANTHER" id="PTHR34298:SF2">
    <property type="entry name" value="SEGREGATION AND CONDENSATION PROTEIN B"/>
    <property type="match status" value="1"/>
</dbReference>
<dbReference type="Pfam" id="PF04079">
    <property type="entry name" value="SMC_ScpB"/>
    <property type="match status" value="1"/>
</dbReference>
<dbReference type="PIRSF" id="PIRSF019345">
    <property type="entry name" value="ScpB"/>
    <property type="match status" value="1"/>
</dbReference>
<dbReference type="SUPFAM" id="SSF46785">
    <property type="entry name" value="Winged helix' DNA-binding domain"/>
    <property type="match status" value="2"/>
</dbReference>
<gene>
    <name evidence="1" type="primary">scpB</name>
    <name type="ordered locus">SPG_1760</name>
</gene>
<keyword id="KW-0131">Cell cycle</keyword>
<keyword id="KW-0132">Cell division</keyword>
<keyword id="KW-0159">Chromosome partition</keyword>
<keyword id="KW-0963">Cytoplasm</keyword>
<accession>B5E1Y7</accession>
<feature type="chain" id="PRO_1000187540" description="Segregation and condensation protein B">
    <location>
        <begin position="1"/>
        <end position="189"/>
    </location>
</feature>
<evidence type="ECO:0000255" key="1">
    <source>
        <dbReference type="HAMAP-Rule" id="MF_01804"/>
    </source>
</evidence>
<protein>
    <recommendedName>
        <fullName evidence="1">Segregation and condensation protein B</fullName>
    </recommendedName>
</protein>
<comment type="function">
    <text evidence="1">Participates in chromosomal partition during cell division. May act via the formation of a condensin-like complex containing Smc and ScpA that pull DNA away from mid-cell into both cell halves.</text>
</comment>
<comment type="subunit">
    <text evidence="1">Homodimer. Homodimerization may be required to stabilize the binding of ScpA to the Smc head domains. Component of a cohesin-like complex composed of ScpA, ScpB and the Smc homodimer, in which ScpA and ScpB bind to the head domain of Smc. The presence of the three proteins is required for the association of the complex with DNA.</text>
</comment>
<comment type="subcellular location">
    <subcellularLocation>
        <location evidence="1">Cytoplasm</location>
    </subcellularLocation>
    <text evidence="1">Associated with two foci at the outer edges of the nucleoid region in young cells, and at four foci within both cell halves in older cells.</text>
</comment>
<comment type="similarity">
    <text evidence="1">Belongs to the ScpB family.</text>
</comment>
<proteinExistence type="inferred from homology"/>
<name>SCPB_STRP4</name>
<reference key="1">
    <citation type="journal article" date="2001" name="Microb. Drug Resist.">
        <title>Annotated draft genomic sequence from a Streptococcus pneumoniae type 19F clinical isolate.</title>
        <authorList>
            <person name="Dopazo J."/>
            <person name="Mendoza A."/>
            <person name="Herrero J."/>
            <person name="Caldara F."/>
            <person name="Humbert Y."/>
            <person name="Friedli L."/>
            <person name="Guerrier M."/>
            <person name="Grand-Schenk E."/>
            <person name="Gandin C."/>
            <person name="de Francesco M."/>
            <person name="Polissi A."/>
            <person name="Buell G."/>
            <person name="Feger G."/>
            <person name="Garcia E."/>
            <person name="Peitsch M."/>
            <person name="Garcia-Bustos J.F."/>
        </authorList>
    </citation>
    <scope>NUCLEOTIDE SEQUENCE [LARGE SCALE GENOMIC DNA]</scope>
    <source>
        <strain>G54</strain>
    </source>
</reference>
<reference key="2">
    <citation type="submission" date="2008-03" db="EMBL/GenBank/DDBJ databases">
        <title>Pneumococcal beta glucoside metabolism investigated by whole genome comparison.</title>
        <authorList>
            <person name="Mulas L."/>
            <person name="Trappetti C."/>
            <person name="Hakenbeck R."/>
            <person name="Iannelli F."/>
            <person name="Pozzi G."/>
            <person name="Davidsen T.M."/>
            <person name="Tettelin H."/>
            <person name="Oggioni M."/>
        </authorList>
    </citation>
    <scope>NUCLEOTIDE SEQUENCE [LARGE SCALE GENOMIC DNA]</scope>
    <source>
        <strain>G54</strain>
    </source>
</reference>
<organism>
    <name type="scientific">Streptococcus pneumoniae serotype 19F (strain G54)</name>
    <dbReference type="NCBI Taxonomy" id="512566"/>
    <lineage>
        <taxon>Bacteria</taxon>
        <taxon>Bacillati</taxon>
        <taxon>Bacillota</taxon>
        <taxon>Bacilli</taxon>
        <taxon>Lactobacillales</taxon>
        <taxon>Streptococcaceae</taxon>
        <taxon>Streptococcus</taxon>
    </lineage>
</organism>